<gene>
    <name evidence="1" type="primary">eIF3-S9</name>
    <name type="ORF">AAEL007718</name>
</gene>
<dbReference type="EMBL" id="CH477461">
    <property type="protein sequence ID" value="EAT40558.1"/>
    <property type="molecule type" value="Genomic_DNA"/>
</dbReference>
<dbReference type="RefSeq" id="XP_001652847.1">
    <property type="nucleotide sequence ID" value="XM_001652797.1"/>
</dbReference>
<dbReference type="SMR" id="Q0IEY3"/>
<dbReference type="FunCoup" id="Q0IEY3">
    <property type="interactions" value="2551"/>
</dbReference>
<dbReference type="STRING" id="7159.Q0IEY3"/>
<dbReference type="PaxDb" id="7159-AAEL007718-PA"/>
<dbReference type="GeneID" id="5569547"/>
<dbReference type="KEGG" id="aag:5569547"/>
<dbReference type="CTD" id="8662"/>
<dbReference type="VEuPathDB" id="VectorBase:AAEL007718"/>
<dbReference type="eggNOG" id="KOG2314">
    <property type="taxonomic scope" value="Eukaryota"/>
</dbReference>
<dbReference type="HOGENOM" id="CLU_011152_1_0_1"/>
<dbReference type="InParanoid" id="Q0IEY3"/>
<dbReference type="OMA" id="LWGGPQF"/>
<dbReference type="OrthoDB" id="10250414at2759"/>
<dbReference type="PhylomeDB" id="Q0IEY3"/>
<dbReference type="Proteomes" id="UP000008820">
    <property type="component" value="Unassembled WGS sequence"/>
</dbReference>
<dbReference type="Proteomes" id="UP000682892">
    <property type="component" value="Unassembled WGS sequence"/>
</dbReference>
<dbReference type="GO" id="GO:0016282">
    <property type="term" value="C:eukaryotic 43S preinitiation complex"/>
    <property type="evidence" value="ECO:0007669"/>
    <property type="project" value="UniProtKB-UniRule"/>
</dbReference>
<dbReference type="GO" id="GO:0033290">
    <property type="term" value="C:eukaryotic 48S preinitiation complex"/>
    <property type="evidence" value="ECO:0007669"/>
    <property type="project" value="UniProtKB-UniRule"/>
</dbReference>
<dbReference type="GO" id="GO:0005852">
    <property type="term" value="C:eukaryotic translation initiation factor 3 complex"/>
    <property type="evidence" value="ECO:0000250"/>
    <property type="project" value="UniProtKB"/>
</dbReference>
<dbReference type="GO" id="GO:0003723">
    <property type="term" value="F:RNA binding"/>
    <property type="evidence" value="ECO:0007669"/>
    <property type="project" value="UniProtKB-UniRule"/>
</dbReference>
<dbReference type="GO" id="GO:0003743">
    <property type="term" value="F:translation initiation factor activity"/>
    <property type="evidence" value="ECO:0000250"/>
    <property type="project" value="UniProtKB"/>
</dbReference>
<dbReference type="GO" id="GO:0031369">
    <property type="term" value="F:translation initiation factor binding"/>
    <property type="evidence" value="ECO:0007669"/>
    <property type="project" value="InterPro"/>
</dbReference>
<dbReference type="GO" id="GO:0001732">
    <property type="term" value="P:formation of cytoplasmic translation initiation complex"/>
    <property type="evidence" value="ECO:0007669"/>
    <property type="project" value="UniProtKB-UniRule"/>
</dbReference>
<dbReference type="GO" id="GO:0006446">
    <property type="term" value="P:regulation of translational initiation"/>
    <property type="evidence" value="ECO:0000250"/>
    <property type="project" value="UniProtKB"/>
</dbReference>
<dbReference type="CDD" id="cd12278">
    <property type="entry name" value="RRM_eIF3B"/>
    <property type="match status" value="1"/>
</dbReference>
<dbReference type="FunFam" id="2.130.10.10:FF:001060">
    <property type="entry name" value="Eukaryotic translation initiation factor 3 subunit B"/>
    <property type="match status" value="1"/>
</dbReference>
<dbReference type="FunFam" id="3.30.70.330:FF:000235">
    <property type="entry name" value="Eukaryotic translation initiation factor 3 subunit B"/>
    <property type="match status" value="1"/>
</dbReference>
<dbReference type="Gene3D" id="3.30.70.330">
    <property type="match status" value="1"/>
</dbReference>
<dbReference type="Gene3D" id="2.130.10.10">
    <property type="entry name" value="YVTN repeat-like/Quinoprotein amine dehydrogenase"/>
    <property type="match status" value="2"/>
</dbReference>
<dbReference type="HAMAP" id="MF_03001">
    <property type="entry name" value="eIF3b"/>
    <property type="match status" value="1"/>
</dbReference>
<dbReference type="InterPro" id="IPR011400">
    <property type="entry name" value="EIF3B"/>
</dbReference>
<dbReference type="InterPro" id="IPR034363">
    <property type="entry name" value="eIF3B_RRM"/>
</dbReference>
<dbReference type="InterPro" id="IPR012677">
    <property type="entry name" value="Nucleotide-bd_a/b_plait_sf"/>
</dbReference>
<dbReference type="InterPro" id="IPR035979">
    <property type="entry name" value="RBD_domain_sf"/>
</dbReference>
<dbReference type="InterPro" id="IPR000504">
    <property type="entry name" value="RRM_dom"/>
</dbReference>
<dbReference type="InterPro" id="IPR013979">
    <property type="entry name" value="TIF_beta_prop-like"/>
</dbReference>
<dbReference type="InterPro" id="IPR015943">
    <property type="entry name" value="WD40/YVTN_repeat-like_dom_sf"/>
</dbReference>
<dbReference type="PANTHER" id="PTHR14068">
    <property type="entry name" value="EUKARYOTIC TRANSLATION INITIATION FACTOR 3 EIF3 -RELATED"/>
    <property type="match status" value="1"/>
</dbReference>
<dbReference type="PANTHER" id="PTHR14068:SF0">
    <property type="entry name" value="EUKARYOTIC TRANSLATION INITIATION FACTOR 3 SUBUNIT B"/>
    <property type="match status" value="1"/>
</dbReference>
<dbReference type="Pfam" id="PF08662">
    <property type="entry name" value="eIF2A"/>
    <property type="match status" value="2"/>
</dbReference>
<dbReference type="Pfam" id="PF00076">
    <property type="entry name" value="RRM_1"/>
    <property type="match status" value="1"/>
</dbReference>
<dbReference type="PIRSF" id="PIRSF036424">
    <property type="entry name" value="eIF3b"/>
    <property type="match status" value="1"/>
</dbReference>
<dbReference type="SMART" id="SM00360">
    <property type="entry name" value="RRM"/>
    <property type="match status" value="1"/>
</dbReference>
<dbReference type="SUPFAM" id="SSF82171">
    <property type="entry name" value="DPP6 N-terminal domain-like"/>
    <property type="match status" value="1"/>
</dbReference>
<dbReference type="SUPFAM" id="SSF54928">
    <property type="entry name" value="RNA-binding domain, RBD"/>
    <property type="match status" value="1"/>
</dbReference>
<dbReference type="PROSITE" id="PS50102">
    <property type="entry name" value="RRM"/>
    <property type="match status" value="1"/>
</dbReference>
<comment type="function">
    <text evidence="1">RNA-binding component of the eukaryotic translation initiation factor 3 (eIF-3) complex, which is involved in protein synthesis of a specialized repertoire of mRNAs and, together with other initiation factors, stimulates binding of mRNA and methionyl-tRNAi to the 40S ribosome. The eIF-3 complex specifically targets and initiates translation of a subset of mRNAs involved in cell proliferation.</text>
</comment>
<comment type="subunit">
    <text evidence="1">Component of the eukaryotic translation initiation factor 3 (eIF-3) complex.</text>
</comment>
<comment type="subcellular location">
    <subcellularLocation>
        <location evidence="1">Cytoplasm</location>
    </subcellularLocation>
</comment>
<comment type="similarity">
    <text evidence="1">Belongs to the eIF-3 subunit B family.</text>
</comment>
<accession>Q0IEY3</accession>
<evidence type="ECO:0000255" key="1">
    <source>
        <dbReference type="HAMAP-Rule" id="MF_03001"/>
    </source>
</evidence>
<evidence type="ECO:0000256" key="2">
    <source>
        <dbReference type="SAM" id="MobiDB-lite"/>
    </source>
</evidence>
<organism>
    <name type="scientific">Aedes aegypti</name>
    <name type="common">Yellowfever mosquito</name>
    <name type="synonym">Culex aegypti</name>
    <dbReference type="NCBI Taxonomy" id="7159"/>
    <lineage>
        <taxon>Eukaryota</taxon>
        <taxon>Metazoa</taxon>
        <taxon>Ecdysozoa</taxon>
        <taxon>Arthropoda</taxon>
        <taxon>Hexapoda</taxon>
        <taxon>Insecta</taxon>
        <taxon>Pterygota</taxon>
        <taxon>Neoptera</taxon>
        <taxon>Endopterygota</taxon>
        <taxon>Diptera</taxon>
        <taxon>Nematocera</taxon>
        <taxon>Culicoidea</taxon>
        <taxon>Culicidae</taxon>
        <taxon>Culicinae</taxon>
        <taxon>Aedini</taxon>
        <taxon>Aedes</taxon>
        <taxon>Stegomyia</taxon>
    </lineage>
</organism>
<reference key="1">
    <citation type="journal article" date="2007" name="Science">
        <title>Genome sequence of Aedes aegypti, a major arbovirus vector.</title>
        <authorList>
            <person name="Nene V."/>
            <person name="Wortman J.R."/>
            <person name="Lawson D."/>
            <person name="Haas B.J."/>
            <person name="Kodira C.D."/>
            <person name="Tu Z.J."/>
            <person name="Loftus B.J."/>
            <person name="Xi Z."/>
            <person name="Megy K."/>
            <person name="Grabherr M."/>
            <person name="Ren Q."/>
            <person name="Zdobnov E.M."/>
            <person name="Lobo N.F."/>
            <person name="Campbell K.S."/>
            <person name="Brown S.E."/>
            <person name="Bonaldo M.F."/>
            <person name="Zhu J."/>
            <person name="Sinkins S.P."/>
            <person name="Hogenkamp D.G."/>
            <person name="Amedeo P."/>
            <person name="Arensburger P."/>
            <person name="Atkinson P.W."/>
            <person name="Bidwell S.L."/>
            <person name="Biedler J."/>
            <person name="Birney E."/>
            <person name="Bruggner R.V."/>
            <person name="Costas J."/>
            <person name="Coy M.R."/>
            <person name="Crabtree J."/>
            <person name="Crawford M."/>
            <person name="DeBruyn B."/>
            <person name="DeCaprio D."/>
            <person name="Eiglmeier K."/>
            <person name="Eisenstadt E."/>
            <person name="El-Dorry H."/>
            <person name="Gelbart W.M."/>
            <person name="Gomes S.L."/>
            <person name="Hammond M."/>
            <person name="Hannick L.I."/>
            <person name="Hogan J.R."/>
            <person name="Holmes M.H."/>
            <person name="Jaffe D."/>
            <person name="Johnston S.J."/>
            <person name="Kennedy R.C."/>
            <person name="Koo H."/>
            <person name="Kravitz S."/>
            <person name="Kriventseva E.V."/>
            <person name="Kulp D."/>
            <person name="Labutti K."/>
            <person name="Lee E."/>
            <person name="Li S."/>
            <person name="Lovin D.D."/>
            <person name="Mao C."/>
            <person name="Mauceli E."/>
            <person name="Menck C.F."/>
            <person name="Miller J.R."/>
            <person name="Montgomery P."/>
            <person name="Mori A."/>
            <person name="Nascimento A.L."/>
            <person name="Naveira H.F."/>
            <person name="Nusbaum C."/>
            <person name="O'Leary S.B."/>
            <person name="Orvis J."/>
            <person name="Pertea M."/>
            <person name="Quesneville H."/>
            <person name="Reidenbach K.R."/>
            <person name="Rogers Y.-H.C."/>
            <person name="Roth C.W."/>
            <person name="Schneider J.R."/>
            <person name="Schatz M."/>
            <person name="Shumway M."/>
            <person name="Stanke M."/>
            <person name="Stinson E.O."/>
            <person name="Tubio J.M.C."/>
            <person name="Vanzee J.P."/>
            <person name="Verjovski-Almeida S."/>
            <person name="Werner D."/>
            <person name="White O.R."/>
            <person name="Wyder S."/>
            <person name="Zeng Q."/>
            <person name="Zhao Q."/>
            <person name="Zhao Y."/>
            <person name="Hill C.A."/>
            <person name="Raikhel A.S."/>
            <person name="Soares M.B."/>
            <person name="Knudson D.L."/>
            <person name="Lee N.H."/>
            <person name="Galagan J."/>
            <person name="Salzberg S.L."/>
            <person name="Paulsen I.T."/>
            <person name="Dimopoulos G."/>
            <person name="Collins F.H."/>
            <person name="Bruce B."/>
            <person name="Fraser-Liggett C.M."/>
            <person name="Severson D.W."/>
        </authorList>
    </citation>
    <scope>NUCLEOTIDE SEQUENCE [LARGE SCALE GENOMIC DNA]</scope>
    <source>
        <strain>LVPib12</strain>
    </source>
</reference>
<keyword id="KW-0175">Coiled coil</keyword>
<keyword id="KW-0963">Cytoplasm</keyword>
<keyword id="KW-0396">Initiation factor</keyword>
<keyword id="KW-0648">Protein biosynthesis</keyword>
<keyword id="KW-1185">Reference proteome</keyword>
<keyword id="KW-0677">Repeat</keyword>
<keyword id="KW-0694">RNA-binding</keyword>
<keyword id="KW-0853">WD repeat</keyword>
<proteinExistence type="inferred from homology"/>
<feature type="chain" id="PRO_0000363790" description="Eukaryotic translation initiation factor 3 subunit B">
    <location>
        <begin position="1"/>
        <end position="688"/>
    </location>
</feature>
<feature type="domain" description="RRM" evidence="1">
    <location>
        <begin position="57"/>
        <end position="141"/>
    </location>
</feature>
<feature type="repeat" description="WD 1">
    <location>
        <begin position="208"/>
        <end position="246"/>
    </location>
</feature>
<feature type="repeat" description="WD 2">
    <location>
        <begin position="247"/>
        <end position="287"/>
    </location>
</feature>
<feature type="repeat" description="WD 3">
    <location>
        <begin position="291"/>
        <end position="329"/>
    </location>
</feature>
<feature type="repeat" description="WD 4">
    <location>
        <begin position="332"/>
        <end position="367"/>
    </location>
</feature>
<feature type="repeat" description="WD 5">
    <location>
        <begin position="440"/>
        <end position="482"/>
    </location>
</feature>
<feature type="repeat" description="WD 6">
    <location>
        <begin position="527"/>
        <end position="572"/>
    </location>
</feature>
<feature type="region of interest" description="Disordered" evidence="2">
    <location>
        <begin position="1"/>
        <end position="32"/>
    </location>
</feature>
<feature type="coiled-coil region" evidence="1">
    <location>
        <begin position="613"/>
        <end position="642"/>
    </location>
</feature>
<feature type="compositionally biased region" description="Acidic residues" evidence="2">
    <location>
        <begin position="9"/>
        <end position="32"/>
    </location>
</feature>
<protein>
    <recommendedName>
        <fullName evidence="1">Eukaryotic translation initiation factor 3 subunit B</fullName>
        <shortName evidence="1">eIF3b</shortName>
    </recommendedName>
    <alternativeName>
        <fullName evidence="1">Eukaryotic translation initiation factor 3 subunit 9</fullName>
    </alternativeName>
</protein>
<sequence length="688" mass="80117">MAKKKGENYDSDGGDDQDYDEEPNFDDPEGFVDDVSDEELLGDFLKQKPCESDGVENVIVVDNIPVVGPARFHKLQGVLEKLFKTAGTIVNIHYPKDDEENTRGYAFIEFKNPEMAEEAVKAFNNYRLDKSHTLLVNLFSDFQKYSDIPKEWSPPEPQPYKMQNDLYNFITEPDAQDQFCVIAESSPGAVQVQFWQNTQPEPVELLTRDRFTETYVKWSPLGTYIVTFHKQGVVIWGGSNFTKINKFPHSGTQYVDFSPCEQYLVTYGPNGQKIIIWDIRTGTEKRSFISDGTSNMSMFRWSHDDKYVARMGDNAIHVYETSTFYLLDKKSIKVQGIRNFSWSPTDNIIAYWMSEDLEAPARVTLLEIPRKNEIRNKNLFNVADCKIHWQKSGDYLCVKVDRYSKSKKDKKDADVKFLGMFYNFEIFHMREKDIPVDSVEVKETILAFAWEPVGSKFAIIHGDPASANVSFYEAKKGQEPTMLKKLEKKICSHLFWSPRGQFIVLANLQAGSFEFVDTNDFTIMKSGDHFRASEVEWDPTGRYVVTGTSGKVKEDHGYHIWSFQGKILKRVNLKNFILFLWRPRPPTLLSDEKQKEIRKNLKKYYAQFESKDRIRMTRASKELLEKRAKLREQFVEYRTKRVSEWEEQKYRRMQLRNNIDTDTLDADPDNVEEEIVEILVREDTTLLE</sequence>
<name>EIF3B_AEDAE</name>